<protein>
    <recommendedName>
        <fullName>Packaging efficiency factor P6</fullName>
    </recommendedName>
</protein>
<comment type="function">
    <text evidence="3">Together with the packaging ATPase P9, forms the external part of the portal vertex that is embeded in the capsid and which plays critical roles in genome packaging and genome ejection. Both proteins multimerize as a single ring-shaped heterdodecamer arranged around a central channel.</text>
</comment>
<comment type="subunit">
    <text evidence="2 3">Heterodimer of P6 and P9; further multimerizes as hexamers of heterodimers. Part of the dodecameric portal complex that is composed of the packaging efficiency factor P6, the DNA packaging ATPase P9, and the internal heterododecamer P20/P22 which spans the virion inner membrane.</text>
</comment>
<comment type="subcellular location">
    <subcellularLocation>
        <location evidence="4">Virion</location>
    </subcellularLocation>
    <text evidence="2">Localizes at the unique vertex of the capsid, which extends to the internal membrane via two small integral membrane proteins, P20 and P22. Packaging efficiency factor P6 attaches to the virion via these proteins and is, in turn, necessary for the attachment of DNA packaging protein P9 to the capsid.</text>
</comment>
<feature type="chain" id="PRO_0000165350" description="Packaging efficiency factor P6">
    <location>
        <begin position="1"/>
        <end position="166"/>
    </location>
</feature>
<feature type="region of interest" description="Disordered" evidence="1">
    <location>
        <begin position="134"/>
        <end position="166"/>
    </location>
</feature>
<dbReference type="EMBL" id="AY848689">
    <property type="protein sequence ID" value="AAX45924.1"/>
    <property type="molecule type" value="Genomic_DNA"/>
</dbReference>
<dbReference type="PIR" id="H40477">
    <property type="entry name" value="WMBPP6"/>
</dbReference>
<dbReference type="RefSeq" id="NP_040688.1">
    <property type="nucleotide sequence ID" value="NC_001421.2"/>
</dbReference>
<dbReference type="RefSeq" id="YP_009639963.1">
    <property type="nucleotide sequence ID" value="NC_001421.2"/>
</dbReference>
<dbReference type="SMR" id="P27379"/>
<dbReference type="GeneID" id="1260941"/>
<dbReference type="OrthoDB" id="34949at10239"/>
<dbReference type="Proteomes" id="UP000002143">
    <property type="component" value="Segment"/>
</dbReference>
<dbReference type="GO" id="GO:0044423">
    <property type="term" value="C:virion component"/>
    <property type="evidence" value="ECO:0007669"/>
    <property type="project" value="UniProtKB-KW"/>
</dbReference>
<dbReference type="GO" id="GO:0019073">
    <property type="term" value="P:viral DNA genome packaging"/>
    <property type="evidence" value="ECO:0000315"/>
    <property type="project" value="CACAO"/>
</dbReference>
<name>PKG6_BPPRD</name>
<organismHost>
    <name type="scientific">Acinetobacter calcoaceticus</name>
    <dbReference type="NCBI Taxonomy" id="471"/>
</organismHost>
<organismHost>
    <name type="scientific">Escherichia coli</name>
    <dbReference type="NCBI Taxonomy" id="562"/>
</organismHost>
<organismHost>
    <name type="scientific">Proteus mirabilis</name>
    <dbReference type="NCBI Taxonomy" id="584"/>
</organismHost>
<organismHost>
    <name type="scientific">Pseudomonas aeruginosa</name>
    <dbReference type="NCBI Taxonomy" id="287"/>
</organismHost>
<organismHost>
    <name type="scientific">Pseudomonas fluorescens</name>
    <dbReference type="NCBI Taxonomy" id="294"/>
</organismHost>
<organismHost>
    <name type="scientific">Pseudomonas putida</name>
    <name type="common">Arthrobacter siderocapsulatus</name>
    <dbReference type="NCBI Taxonomy" id="303"/>
</organismHost>
<organismHost>
    <name type="scientific">Salmonella typhimurium</name>
    <dbReference type="NCBI Taxonomy" id="90371"/>
</organismHost>
<organismHost>
    <name type="scientific">Vibrio cholerae</name>
    <dbReference type="NCBI Taxonomy" id="666"/>
</organismHost>
<evidence type="ECO:0000256" key="1">
    <source>
        <dbReference type="SAM" id="MobiDB-lite"/>
    </source>
</evidence>
<evidence type="ECO:0000269" key="2">
    <source>
    </source>
</evidence>
<evidence type="ECO:0000269" key="3">
    <source>
    </source>
</evidence>
<evidence type="ECO:0000305" key="4"/>
<accession>P27379</accession>
<accession>Q3T4N7</accession>
<organism>
    <name type="scientific">Enterobacteria phage PRD1</name>
    <name type="common">Bacteriophage PRD1</name>
    <dbReference type="NCBI Taxonomy" id="10658"/>
    <lineage>
        <taxon>Viruses</taxon>
        <taxon>Varidnaviria</taxon>
        <taxon>Bamfordvirae</taxon>
        <taxon>Preplasmiviricota</taxon>
        <taxon>Tectiliviricetes</taxon>
        <taxon>Kalamavirales</taxon>
        <taxon>Tectiviridae</taxon>
        <taxon>Alphatectivirus</taxon>
        <taxon>Alphatectivirus PRD1</taxon>
    </lineage>
</organism>
<proteinExistence type="evidence at protein level"/>
<sequence length="166" mass="17573">MDTEEIKEEMQEAAEAAIENAVETAELETAAIKAEGAAAAAEQSAEQAAVMAATLAASVEANAAQQIAEHSEQVQTQEEKISWLENQVMAMASNLQMMQEAVTALTVSQSLTPEPSPVPAVEVEAMPEAVTVEILPESAGDQQEAEPVPSVGDQQETAPRKRFRAI</sequence>
<gene>
    <name type="primary">VI</name>
</gene>
<keyword id="KW-0903">Direct protein sequencing</keyword>
<keyword id="KW-1185">Reference proteome</keyword>
<keyword id="KW-0231">Viral genome packaging</keyword>
<keyword id="KW-1188">Viral release from host cell</keyword>
<keyword id="KW-0946">Virion</keyword>
<reference key="1">
    <citation type="journal article" date="1991" name="Virology">
        <title>Genome organization of membrane-containing bacteriophage PRD1.</title>
        <authorList>
            <person name="Bamford J.K.H."/>
            <person name="Haenninen A.-L."/>
            <person name="Pakula T.M."/>
            <person name="Ojala P.M."/>
            <person name="Kalkkinen N."/>
            <person name="Frilander M."/>
            <person name="Bamford D.H."/>
        </authorList>
    </citation>
    <scope>NUCLEOTIDE SEQUENCE [GENOMIC DNA]</scope>
    <scope>PROTEIN SEQUENCE OF 1-6</scope>
</reference>
<reference key="2">
    <citation type="journal article" date="2005" name="J. Mol. Biol.">
        <title>A snapshot of viral evolution from genome analysis of the tectiviridae family.</title>
        <authorList>
            <person name="Saren A.M."/>
            <person name="Ravantti J.J."/>
            <person name="Benson S.D."/>
            <person name="Burnett R.M."/>
            <person name="Paulin L."/>
            <person name="Bamford D.H."/>
            <person name="Bamford J.K.H."/>
        </authorList>
    </citation>
    <scope>NUCLEOTIDE SEQUENCE [GENOMIC DNA]</scope>
</reference>
<reference key="3">
    <citation type="journal article" date="2003" name="J. Virol.">
        <title>The unique vertex of bacterial virus PRD1 is connected to the viral internal membrane.</title>
        <authorList>
            <person name="Stromsten N.J."/>
            <person name="Bamford D.H."/>
            <person name="Bamford J.K.H."/>
        </authorList>
    </citation>
    <scope>IDENTIFICATION IN THE PORTAL COMPLEX</scope>
    <scope>SUBCELLULAR LOCATION</scope>
</reference>
<reference key="4">
    <citation type="journal article" date="2014" name="PLoS Biol.">
        <title>A structural model of the genome packaging process in a membrane-containing double stranded DNA virus.</title>
        <authorList>
            <person name="Hong C."/>
            <person name="Oksanen H.M."/>
            <person name="Liu X."/>
            <person name="Jakana J."/>
            <person name="Bamford D.H."/>
            <person name="Chiu W."/>
        </authorList>
    </citation>
    <scope>FUNCTION</scope>
    <scope>SUBUNIT</scope>
    <scope>IDENTIFICATION IN THE PORTAL COMPLEX</scope>
</reference>